<gene>
    <name type="primary">NDUFS3</name>
</gene>
<protein>
    <recommendedName>
        <fullName>NADH dehydrogenase [ubiquinone] iron-sulfur protein 3, mitochondrial</fullName>
        <ecNumber evidence="1">7.1.1.2</ecNumber>
    </recommendedName>
    <alternativeName>
        <fullName>Complex I-30kD</fullName>
        <shortName>CI-30kD</shortName>
    </alternativeName>
    <alternativeName>
        <fullName>NADH-ubiquinone oxidoreductase 30 kDa subunit</fullName>
    </alternativeName>
</protein>
<proteinExistence type="evidence at transcript level"/>
<reference key="1">
    <citation type="journal article" date="2006" name="Gene">
        <title>Adaptive selection of mitochondrial complex I subunits during primate radiation.</title>
        <authorList>
            <person name="Mishmar D."/>
            <person name="Ruiz-Pesini E."/>
            <person name="Mondragon-Palomino M."/>
            <person name="Procaccio V."/>
            <person name="Gaut B."/>
            <person name="Wallace D.C."/>
        </authorList>
    </citation>
    <scope>NUCLEOTIDE SEQUENCE [MRNA]</scope>
</reference>
<dbReference type="EC" id="7.1.1.2" evidence="1"/>
<dbReference type="EMBL" id="DQ885667">
    <property type="protein sequence ID" value="ABH12176.1"/>
    <property type="molecule type" value="mRNA"/>
</dbReference>
<dbReference type="RefSeq" id="NP_001266569.1">
    <property type="nucleotide sequence ID" value="NM_001279640.1"/>
</dbReference>
<dbReference type="SMR" id="Q0MQG7"/>
<dbReference type="FunCoup" id="Q0MQG7">
    <property type="interactions" value="1574"/>
</dbReference>
<dbReference type="STRING" id="9593.ENSGGOP00000014036"/>
<dbReference type="GeneID" id="101133932"/>
<dbReference type="KEGG" id="ggo:101133932"/>
<dbReference type="CTD" id="4722"/>
<dbReference type="eggNOG" id="KOG1713">
    <property type="taxonomic scope" value="Eukaryota"/>
</dbReference>
<dbReference type="InParanoid" id="Q0MQG7"/>
<dbReference type="OrthoDB" id="2450at9604"/>
<dbReference type="Proteomes" id="UP000001519">
    <property type="component" value="Unplaced"/>
</dbReference>
<dbReference type="GO" id="GO:0005743">
    <property type="term" value="C:mitochondrial inner membrane"/>
    <property type="evidence" value="ECO:0000250"/>
    <property type="project" value="UniProtKB"/>
</dbReference>
<dbReference type="GO" id="GO:0031966">
    <property type="term" value="C:mitochondrial membrane"/>
    <property type="evidence" value="ECO:0000250"/>
    <property type="project" value="UniProtKB"/>
</dbReference>
<dbReference type="GO" id="GO:0045271">
    <property type="term" value="C:respiratory chain complex I"/>
    <property type="evidence" value="ECO:0000250"/>
    <property type="project" value="UniProtKB"/>
</dbReference>
<dbReference type="GO" id="GO:0008137">
    <property type="term" value="F:NADH dehydrogenase (ubiquinone) activity"/>
    <property type="evidence" value="ECO:0000250"/>
    <property type="project" value="UniProtKB"/>
</dbReference>
<dbReference type="GO" id="GO:0003954">
    <property type="term" value="F:NADH dehydrogenase activity"/>
    <property type="evidence" value="ECO:0000250"/>
    <property type="project" value="UniProtKB"/>
</dbReference>
<dbReference type="GO" id="GO:0006120">
    <property type="term" value="P:mitochondrial electron transport, NADH to ubiquinone"/>
    <property type="evidence" value="ECO:0000250"/>
    <property type="project" value="UniProtKB"/>
</dbReference>
<dbReference type="GO" id="GO:0032981">
    <property type="term" value="P:mitochondrial respiratory chain complex I assembly"/>
    <property type="evidence" value="ECO:0000250"/>
    <property type="project" value="UniProtKB"/>
</dbReference>
<dbReference type="GO" id="GO:0072593">
    <property type="term" value="P:reactive oxygen species metabolic process"/>
    <property type="evidence" value="ECO:0000250"/>
    <property type="project" value="UniProtKB"/>
</dbReference>
<dbReference type="FunFam" id="3.30.460.80:FF:000002">
    <property type="entry name" value="NADH dehydrogenase iron-sulfur protein 3, mitochondrial"/>
    <property type="match status" value="1"/>
</dbReference>
<dbReference type="Gene3D" id="3.30.460.80">
    <property type="entry name" value="NADH:ubiquinone oxidoreductase, 30kDa subunit"/>
    <property type="match status" value="1"/>
</dbReference>
<dbReference type="HAMAP" id="MF_01357">
    <property type="entry name" value="NDH1_NuoC"/>
    <property type="match status" value="1"/>
</dbReference>
<dbReference type="InterPro" id="IPR010218">
    <property type="entry name" value="NADH_DH_suC"/>
</dbReference>
<dbReference type="InterPro" id="IPR037232">
    <property type="entry name" value="NADH_quin_OxRdtase_su_C/D-like"/>
</dbReference>
<dbReference type="InterPro" id="IPR001268">
    <property type="entry name" value="NADH_UbQ_OxRdtase_30kDa_su"/>
</dbReference>
<dbReference type="InterPro" id="IPR020396">
    <property type="entry name" value="NADH_UbQ_OxRdtase_CS"/>
</dbReference>
<dbReference type="NCBIfam" id="TIGR01961">
    <property type="entry name" value="NuoC_fam"/>
    <property type="match status" value="1"/>
</dbReference>
<dbReference type="NCBIfam" id="NF004733">
    <property type="entry name" value="PRK06074.1-5"/>
    <property type="match status" value="1"/>
</dbReference>
<dbReference type="PANTHER" id="PTHR10884:SF14">
    <property type="entry name" value="NADH DEHYDROGENASE [UBIQUINONE] IRON-SULFUR PROTEIN 3, MITOCHONDRIAL"/>
    <property type="match status" value="1"/>
</dbReference>
<dbReference type="PANTHER" id="PTHR10884">
    <property type="entry name" value="NADH DEHYDROGENASE UBIQUINONE IRON-SULFUR PROTEIN 3"/>
    <property type="match status" value="1"/>
</dbReference>
<dbReference type="Pfam" id="PF00329">
    <property type="entry name" value="Complex1_30kDa"/>
    <property type="match status" value="1"/>
</dbReference>
<dbReference type="SUPFAM" id="SSF143243">
    <property type="entry name" value="Nqo5-like"/>
    <property type="match status" value="1"/>
</dbReference>
<dbReference type="PROSITE" id="PS00542">
    <property type="entry name" value="COMPLEX1_30K"/>
    <property type="match status" value="1"/>
</dbReference>
<evidence type="ECO:0000250" key="1">
    <source>
        <dbReference type="UniProtKB" id="O75489"/>
    </source>
</evidence>
<evidence type="ECO:0000255" key="2"/>
<evidence type="ECO:0000305" key="3"/>
<keyword id="KW-0249">Electron transport</keyword>
<keyword id="KW-0472">Membrane</keyword>
<keyword id="KW-0496">Mitochondrion</keyword>
<keyword id="KW-0999">Mitochondrion inner membrane</keyword>
<keyword id="KW-0520">NAD</keyword>
<keyword id="KW-0560">Oxidoreductase</keyword>
<keyword id="KW-1185">Reference proteome</keyword>
<keyword id="KW-0679">Respiratory chain</keyword>
<keyword id="KW-0809">Transit peptide</keyword>
<keyword id="KW-1278">Translocase</keyword>
<keyword id="KW-0813">Transport</keyword>
<keyword id="KW-0830">Ubiquinone</keyword>
<name>NDUS3_GORGO</name>
<accession>Q0MQG7</accession>
<sequence>MVAAVARLWWRGLLGASALTRGAGRPSVLLLPVRRESAGADTRPTVRPRNDVAHKQLSAFGEYVAEILPKYVQQVQVSCFNELEVCIHPDGVIPVLTFLRDHTNAQFKSLVDLTAVDVPTRQNRFEIVYNLLSLRFNSRIRVKTYTDELTPIESAVSVFKAANWYEREIWDMFGVFFANHPDLRRILTDYGFEGHPFRKDFPLSGYVELRYDDEVKRVVAEPVELAQEFRKFDLNSPWEAFPVYRQPPESLKLEAGDKKPDAK</sequence>
<organism>
    <name type="scientific">Gorilla gorilla gorilla</name>
    <name type="common">Western lowland gorilla</name>
    <dbReference type="NCBI Taxonomy" id="9595"/>
    <lineage>
        <taxon>Eukaryota</taxon>
        <taxon>Metazoa</taxon>
        <taxon>Chordata</taxon>
        <taxon>Craniata</taxon>
        <taxon>Vertebrata</taxon>
        <taxon>Euteleostomi</taxon>
        <taxon>Mammalia</taxon>
        <taxon>Eutheria</taxon>
        <taxon>Euarchontoglires</taxon>
        <taxon>Primates</taxon>
        <taxon>Haplorrhini</taxon>
        <taxon>Catarrhini</taxon>
        <taxon>Hominidae</taxon>
        <taxon>Gorilla</taxon>
    </lineage>
</organism>
<comment type="function">
    <text evidence="1">Core subunit of the mitochondrial membrane respiratory chain NADH dehydrogenase (Complex I) which catalyzes electron transfer from NADH through the respiratory chain, using ubiquinone as an electron acceptor (By similarity). Essential for the catalytic activity and assembly of complex I (By similarity).</text>
</comment>
<comment type="catalytic activity">
    <reaction evidence="1">
        <text>a ubiquinone + NADH + 5 H(+)(in) = a ubiquinol + NAD(+) + 4 H(+)(out)</text>
        <dbReference type="Rhea" id="RHEA:29091"/>
        <dbReference type="Rhea" id="RHEA-COMP:9565"/>
        <dbReference type="Rhea" id="RHEA-COMP:9566"/>
        <dbReference type="ChEBI" id="CHEBI:15378"/>
        <dbReference type="ChEBI" id="CHEBI:16389"/>
        <dbReference type="ChEBI" id="CHEBI:17976"/>
        <dbReference type="ChEBI" id="CHEBI:57540"/>
        <dbReference type="ChEBI" id="CHEBI:57945"/>
        <dbReference type="EC" id="7.1.1.2"/>
    </reaction>
</comment>
<comment type="subunit">
    <text evidence="1">Core subunit of respiratory chain NADH dehydrogenase (Complex I) which is composed of 45 different subunits (By similarity). Interacts with NDUFAF3 (By similarity). Interacts with RAB5IF (By similarity). Found in subcomplexes containing subunits NDUFS2, MT-ND1 and NDUFA13 (By similarity).</text>
</comment>
<comment type="subcellular location">
    <subcellularLocation>
        <location evidence="1">Mitochondrion inner membrane</location>
        <topology evidence="1">Peripheral membrane protein</topology>
        <orientation evidence="1">Matrix side</orientation>
    </subcellularLocation>
</comment>
<comment type="similarity">
    <text evidence="3">Belongs to the complex I 30 kDa subunit family.</text>
</comment>
<feature type="transit peptide" description="Mitochondrion" evidence="2">
    <location>
        <begin position="1"/>
        <end position="35"/>
    </location>
</feature>
<feature type="chain" id="PRO_0000251859" description="NADH dehydrogenase [ubiquinone] iron-sulfur protein 3, mitochondrial">
    <location>
        <begin position="36"/>
        <end position="263"/>
    </location>
</feature>